<comment type="function">
    <text evidence="1">Catalyzes the attachment of glutamate to tRNA(Glu) in a two-step reaction: glutamate is first activated by ATP to form Glu-AMP and then transferred to the acceptor end of tRNA(Glu).</text>
</comment>
<comment type="catalytic activity">
    <reaction evidence="1">
        <text>tRNA(Glu) + L-glutamate + ATP = L-glutamyl-tRNA(Glu) + AMP + diphosphate</text>
        <dbReference type="Rhea" id="RHEA:23540"/>
        <dbReference type="Rhea" id="RHEA-COMP:9663"/>
        <dbReference type="Rhea" id="RHEA-COMP:9680"/>
        <dbReference type="ChEBI" id="CHEBI:29985"/>
        <dbReference type="ChEBI" id="CHEBI:30616"/>
        <dbReference type="ChEBI" id="CHEBI:33019"/>
        <dbReference type="ChEBI" id="CHEBI:78442"/>
        <dbReference type="ChEBI" id="CHEBI:78520"/>
        <dbReference type="ChEBI" id="CHEBI:456215"/>
        <dbReference type="EC" id="6.1.1.17"/>
    </reaction>
</comment>
<comment type="subunit">
    <text evidence="1">Monomer.</text>
</comment>
<comment type="subcellular location">
    <subcellularLocation>
        <location evidence="1">Cytoplasm</location>
    </subcellularLocation>
</comment>
<comment type="similarity">
    <text evidence="1">Belongs to the class-I aminoacyl-tRNA synthetase family. Glutamate--tRNA ligase type 1 subfamily.</text>
</comment>
<gene>
    <name evidence="1" type="primary">gltX</name>
    <name type="ordered locus">P9301_04981</name>
</gene>
<organism>
    <name type="scientific">Prochlorococcus marinus (strain MIT 9301)</name>
    <dbReference type="NCBI Taxonomy" id="167546"/>
    <lineage>
        <taxon>Bacteria</taxon>
        <taxon>Bacillati</taxon>
        <taxon>Cyanobacteriota</taxon>
        <taxon>Cyanophyceae</taxon>
        <taxon>Synechococcales</taxon>
        <taxon>Prochlorococcaceae</taxon>
        <taxon>Prochlorococcus</taxon>
    </lineage>
</organism>
<reference key="1">
    <citation type="journal article" date="2007" name="PLoS Genet.">
        <title>Patterns and implications of gene gain and loss in the evolution of Prochlorococcus.</title>
        <authorList>
            <person name="Kettler G.C."/>
            <person name="Martiny A.C."/>
            <person name="Huang K."/>
            <person name="Zucker J."/>
            <person name="Coleman M.L."/>
            <person name="Rodrigue S."/>
            <person name="Chen F."/>
            <person name="Lapidus A."/>
            <person name="Ferriera S."/>
            <person name="Johnson J."/>
            <person name="Steglich C."/>
            <person name="Church G.M."/>
            <person name="Richardson P."/>
            <person name="Chisholm S.W."/>
        </authorList>
    </citation>
    <scope>NUCLEOTIDE SEQUENCE [LARGE SCALE GENOMIC DNA]</scope>
    <source>
        <strain>MIT 9301</strain>
    </source>
</reference>
<dbReference type="EC" id="6.1.1.17" evidence="1"/>
<dbReference type="EMBL" id="CP000576">
    <property type="protein sequence ID" value="ABO17121.1"/>
    <property type="molecule type" value="Genomic_DNA"/>
</dbReference>
<dbReference type="RefSeq" id="WP_011862494.1">
    <property type="nucleotide sequence ID" value="NC_009091.1"/>
</dbReference>
<dbReference type="SMR" id="A3PBJ6"/>
<dbReference type="STRING" id="167546.P9301_04981"/>
<dbReference type="KEGG" id="pmg:P9301_04981"/>
<dbReference type="eggNOG" id="COG0008">
    <property type="taxonomic scope" value="Bacteria"/>
</dbReference>
<dbReference type="HOGENOM" id="CLU_015768_6_0_3"/>
<dbReference type="OrthoDB" id="9807503at2"/>
<dbReference type="Proteomes" id="UP000001430">
    <property type="component" value="Chromosome"/>
</dbReference>
<dbReference type="GO" id="GO:0005829">
    <property type="term" value="C:cytosol"/>
    <property type="evidence" value="ECO:0007669"/>
    <property type="project" value="TreeGrafter"/>
</dbReference>
<dbReference type="GO" id="GO:0005524">
    <property type="term" value="F:ATP binding"/>
    <property type="evidence" value="ECO:0007669"/>
    <property type="project" value="UniProtKB-UniRule"/>
</dbReference>
<dbReference type="GO" id="GO:0004818">
    <property type="term" value="F:glutamate-tRNA ligase activity"/>
    <property type="evidence" value="ECO:0007669"/>
    <property type="project" value="UniProtKB-UniRule"/>
</dbReference>
<dbReference type="GO" id="GO:0000049">
    <property type="term" value="F:tRNA binding"/>
    <property type="evidence" value="ECO:0007669"/>
    <property type="project" value="InterPro"/>
</dbReference>
<dbReference type="GO" id="GO:0008270">
    <property type="term" value="F:zinc ion binding"/>
    <property type="evidence" value="ECO:0007669"/>
    <property type="project" value="InterPro"/>
</dbReference>
<dbReference type="GO" id="GO:0006424">
    <property type="term" value="P:glutamyl-tRNA aminoacylation"/>
    <property type="evidence" value="ECO:0007669"/>
    <property type="project" value="UniProtKB-UniRule"/>
</dbReference>
<dbReference type="CDD" id="cd00808">
    <property type="entry name" value="GluRS_core"/>
    <property type="match status" value="1"/>
</dbReference>
<dbReference type="FunFam" id="3.40.50.620:FF:000007">
    <property type="entry name" value="Glutamate--tRNA ligase"/>
    <property type="match status" value="1"/>
</dbReference>
<dbReference type="Gene3D" id="1.10.10.350">
    <property type="match status" value="1"/>
</dbReference>
<dbReference type="Gene3D" id="1.10.8.70">
    <property type="entry name" value="Glutamate-tRNA synthetase, class I, anticodon-binding domain 1"/>
    <property type="match status" value="1"/>
</dbReference>
<dbReference type="Gene3D" id="1.10.1160.10">
    <property type="entry name" value="Glutamyl-trna Synthetase, Domain 2"/>
    <property type="match status" value="1"/>
</dbReference>
<dbReference type="Gene3D" id="3.90.800.10">
    <property type="entry name" value="Glutamyl-tRNA Synthetase, Domain 3"/>
    <property type="match status" value="1"/>
</dbReference>
<dbReference type="Gene3D" id="3.40.50.620">
    <property type="entry name" value="HUPs"/>
    <property type="match status" value="1"/>
</dbReference>
<dbReference type="HAMAP" id="MF_00022">
    <property type="entry name" value="Glu_tRNA_synth_type1"/>
    <property type="match status" value="1"/>
</dbReference>
<dbReference type="InterPro" id="IPR045462">
    <property type="entry name" value="aa-tRNA-synth_I_cd-bd"/>
</dbReference>
<dbReference type="InterPro" id="IPR020751">
    <property type="entry name" value="aa-tRNA-synth_I_codon-bd_sub2"/>
</dbReference>
<dbReference type="InterPro" id="IPR001412">
    <property type="entry name" value="aa-tRNA-synth_I_CS"/>
</dbReference>
<dbReference type="InterPro" id="IPR008925">
    <property type="entry name" value="aa_tRNA-synth_I_cd-bd_sf"/>
</dbReference>
<dbReference type="InterPro" id="IPR004527">
    <property type="entry name" value="Glu-tRNA-ligase_bac/mito"/>
</dbReference>
<dbReference type="InterPro" id="IPR020752">
    <property type="entry name" value="Glu-tRNA-synth_I_codon-bd_sub1"/>
</dbReference>
<dbReference type="InterPro" id="IPR000924">
    <property type="entry name" value="Glu/Gln-tRNA-synth"/>
</dbReference>
<dbReference type="InterPro" id="IPR020058">
    <property type="entry name" value="Glu/Gln-tRNA-synth_Ib_cat-dom"/>
</dbReference>
<dbReference type="InterPro" id="IPR020061">
    <property type="entry name" value="Glu_tRNA_lig_a-bdl"/>
</dbReference>
<dbReference type="InterPro" id="IPR049940">
    <property type="entry name" value="GluQ/Sye"/>
</dbReference>
<dbReference type="InterPro" id="IPR033910">
    <property type="entry name" value="GluRS_core"/>
</dbReference>
<dbReference type="InterPro" id="IPR014729">
    <property type="entry name" value="Rossmann-like_a/b/a_fold"/>
</dbReference>
<dbReference type="NCBIfam" id="TIGR00464">
    <property type="entry name" value="gltX_bact"/>
    <property type="match status" value="1"/>
</dbReference>
<dbReference type="PANTHER" id="PTHR43311">
    <property type="entry name" value="GLUTAMATE--TRNA LIGASE"/>
    <property type="match status" value="1"/>
</dbReference>
<dbReference type="PANTHER" id="PTHR43311:SF2">
    <property type="entry name" value="GLUTAMATE--TRNA LIGASE, MITOCHONDRIAL-RELATED"/>
    <property type="match status" value="1"/>
</dbReference>
<dbReference type="Pfam" id="PF19269">
    <property type="entry name" value="Anticodon_2"/>
    <property type="match status" value="1"/>
</dbReference>
<dbReference type="Pfam" id="PF00749">
    <property type="entry name" value="tRNA-synt_1c"/>
    <property type="match status" value="1"/>
</dbReference>
<dbReference type="PRINTS" id="PR00987">
    <property type="entry name" value="TRNASYNTHGLU"/>
</dbReference>
<dbReference type="SUPFAM" id="SSF48163">
    <property type="entry name" value="An anticodon-binding domain of class I aminoacyl-tRNA synthetases"/>
    <property type="match status" value="1"/>
</dbReference>
<dbReference type="SUPFAM" id="SSF52374">
    <property type="entry name" value="Nucleotidylyl transferase"/>
    <property type="match status" value="1"/>
</dbReference>
<dbReference type="PROSITE" id="PS00178">
    <property type="entry name" value="AA_TRNA_LIGASE_I"/>
    <property type="match status" value="1"/>
</dbReference>
<protein>
    <recommendedName>
        <fullName evidence="1">Glutamate--tRNA ligase</fullName>
        <ecNumber evidence="1">6.1.1.17</ecNumber>
    </recommendedName>
    <alternativeName>
        <fullName evidence="1">Glutamyl-tRNA synthetase</fullName>
        <shortName evidence="1">GluRS</shortName>
    </alternativeName>
</protein>
<feature type="chain" id="PRO_1000001933" description="Glutamate--tRNA ligase">
    <location>
        <begin position="1"/>
        <end position="476"/>
    </location>
</feature>
<feature type="short sequence motif" description="'HIGH' region" evidence="1">
    <location>
        <begin position="9"/>
        <end position="19"/>
    </location>
</feature>
<feature type="short sequence motif" description="'KMSKS' region" evidence="1">
    <location>
        <begin position="248"/>
        <end position="252"/>
    </location>
</feature>
<feature type="binding site" evidence="1">
    <location>
        <position position="251"/>
    </location>
    <ligand>
        <name>ATP</name>
        <dbReference type="ChEBI" id="CHEBI:30616"/>
    </ligand>
</feature>
<keyword id="KW-0030">Aminoacyl-tRNA synthetase</keyword>
<keyword id="KW-0067">ATP-binding</keyword>
<keyword id="KW-0963">Cytoplasm</keyword>
<keyword id="KW-0436">Ligase</keyword>
<keyword id="KW-0547">Nucleotide-binding</keyword>
<keyword id="KW-0648">Protein biosynthesis</keyword>
<keyword id="KW-1185">Reference proteome</keyword>
<sequence>MEKRLRLAPSPTGLFHIGTARTALFNWLYAQKIGGKFLIRIEDTDFLRSKSEYTKNILEGLKWLGLKWDEEPIKQSDRISIHKSYIKKLLECGAAYRCFTSEDEISELREEQKKKGLPPKHDNRHRSLSKEEIETFISQGRTSVIRFKIDEKIEIKWIDQIRGEIKWQGKDLGGDLVLSRRAKGYEIGDPLYNLAVVVDDNFMNITHVVRGEDHISNTAKQILIYKALNFNLPTFSHTPLILNSEGKKLSKRDCVTSIDEFREMGYLPEALSNYMAFLGWSPKSADREILSLEEISKIFDLSEINKAGAKFSWEKLNWINSQYIKNIESIKLIEIMRKYWDDNGWKPPSEEWANKLAILIRDSMTLLKDSIDQSKPFFLIPTIQKEGQDFLEIRESKLSLKLILNYLIEKNTIKLNKEKAKEIINEISKKHNIKKGILMKSLRVAFFGSLSGPDLIQSWELFAESKTDRTRIERCL</sequence>
<name>SYE_PROM0</name>
<evidence type="ECO:0000255" key="1">
    <source>
        <dbReference type="HAMAP-Rule" id="MF_00022"/>
    </source>
</evidence>
<proteinExistence type="inferred from homology"/>
<accession>A3PBJ6</accession>